<comment type="function">
    <text evidence="1 2 6">Involved in sterol-regulated ubiquitination and degradation of HMG-CoA reductase HMGCR (PubMed:21343306). Involved in positive regulation of AMPA-selective glutamate receptor GRIA2 recycling to the cell surface (By similarity). Acts as a negative regulator of hepatocyte growth during regeneration (By similarity).</text>
</comment>
<comment type="function">
    <molecule>iHOPS</molecule>
    <text evidence="2">May contribute to the regulation of translation during cell-cycle progression. May contribute to the regulation of cell proliferation (By similarity). May be involved in centrosome assembly. Modulates stabilization and nucleolar localization of tumor suppressor CDKN2A and enhances association between CDKN2A and NPM1 (By similarity).</text>
</comment>
<comment type="subunit">
    <text evidence="1 2 6">Interacts with EEF1A1, GRIA2, GRIP1, CAMLG, TUBG1 (By similarity). Interacts with NPM1 and CDKN2A; TMUB1 can enhance interaction between NPM1 and CDKN2A and is proposed to bridge the proteins; proposed to be mediated by iHOPS (By similarity). Interacts with ERLIN2 and AMFR; TMUB1 promotes the interaction of ERLIN2 with AMFR (PubMed:21343306).</text>
</comment>
<comment type="interaction">
    <interactant intactId="EBI-11425701">
        <id>Q9BVT8</id>
    </interactant>
    <interactant intactId="EBI-1046367">
        <id>Q9UKV5</id>
        <label>AMFR</label>
    </interactant>
    <organismsDiffer>false</organismsDiffer>
    <experiments>2</experiments>
</comment>
<comment type="interaction">
    <interactant intactId="EBI-11425701">
        <id>Q9BVT8</id>
    </interactant>
    <interactant intactId="EBI-4400770">
        <id>O94905</id>
        <label>ERLIN2</label>
    </interactant>
    <organismsDiffer>false</organismsDiffer>
    <experiments>6</experiments>
</comment>
<comment type="interaction">
    <interactant intactId="EBI-11425701">
        <id>Q9BVT8</id>
    </interactant>
    <interactant intactId="EBI-712073">
        <id>Q8NBJ4</id>
        <label>GOLM1</label>
    </interactant>
    <organismsDiffer>false</organismsDiffer>
    <experiments>3</experiments>
</comment>
<comment type="interaction">
    <interactant intactId="EBI-11425701">
        <id>Q9BVT8</id>
    </interactant>
    <interactant intactId="EBI-1055254">
        <id>Q8WXH2</id>
        <label>JPH3</label>
    </interactant>
    <organismsDiffer>false</organismsDiffer>
    <experiments>3</experiments>
</comment>
<comment type="interaction">
    <interactant intactId="EBI-11425701">
        <id>Q9BVT8</id>
    </interactant>
    <interactant intactId="EBI-744081">
        <id>Q96EQ0</id>
        <label>SGTB</label>
    </interactant>
    <organismsDiffer>false</organismsDiffer>
    <experiments>3</experiments>
</comment>
<comment type="interaction">
    <interactant intactId="EBI-11425701">
        <id>Q9BVT8</id>
    </interactant>
    <interactant intactId="EBI-1045825">
        <id>P55061</id>
        <label>TMBIM6</label>
    </interactant>
    <organismsDiffer>false</organismsDiffer>
    <experiments>3</experiments>
</comment>
<comment type="interaction">
    <interactant intactId="EBI-11425701">
        <id>Q9BVT8</id>
    </interactant>
    <interactant intactId="EBI-8638294">
        <id>Q9NUH8</id>
        <label>TMEM14B</label>
    </interactant>
    <organismsDiffer>false</organismsDiffer>
    <experiments>3</experiments>
</comment>
<comment type="subcellular location">
    <subcellularLocation>
        <location evidence="2">Membrane</location>
        <topology evidence="2">Multi-pass membrane protein</topology>
    </subcellularLocation>
    <subcellularLocation>
        <location evidence="2">Postsynaptic cell membrane</location>
    </subcellularLocation>
    <subcellularLocation>
        <location evidence="1">Recycling endosome</location>
    </subcellularLocation>
    <subcellularLocation>
        <location evidence="2">Cytoplasm</location>
    </subcellularLocation>
    <subcellularLocation>
        <location evidence="2">Nucleus</location>
    </subcellularLocation>
    <subcellularLocation>
        <location evidence="2">Nucleus</location>
        <location evidence="2">Nucleolus</location>
    </subcellularLocation>
</comment>
<comment type="subcellular location">
    <molecule>iHOPS</molecule>
    <subcellularLocation>
        <location evidence="1 2">Cytoplasm</location>
    </subcellularLocation>
    <subcellularLocation>
        <location evidence="2">Cytoplasm</location>
        <location evidence="2">Cytoskeleton</location>
        <location evidence="2">Microtubule organizing center</location>
        <location evidence="2">Centrosome</location>
    </subcellularLocation>
    <subcellularLocation>
        <location evidence="2">Nucleus</location>
        <location evidence="2">Nucleolus</location>
    </subcellularLocation>
    <subcellularLocation>
        <location evidence="2">Nucleus</location>
    </subcellularLocation>
    <text evidence="2">iHOPS is proposed to be the shuttling form across different cellular compartments. XPO1-dependent exported from the nucleus in dividing cells. Predominantly nuclear during growth arrest.</text>
</comment>
<comment type="tissue specificity">
    <text evidence="7">Ubiquitously expressed with highest levels in mammary and thyroid glands, bone marrow and spleen; limited expression in cardiac, pancreatic and ovarian tissues.</text>
</comment>
<comment type="PTM">
    <molecule>iHOPS</molecule>
    <text evidence="2">Processed by regulated intramembrane proteolysis (RIP)in the N-terminus to release iHOPS from membranes (By similarity).</text>
</comment>
<feature type="chain" id="PRO_0000114922" description="Transmembrane and ubiquitin-like domain-containing protein 1">
    <location>
        <begin position="1"/>
        <end position="246"/>
    </location>
</feature>
<feature type="chain" id="PRO_0000435488" description="iHOPS">
    <location>
        <begin status="unknown"/>
        <end position="246"/>
    </location>
</feature>
<feature type="transmembrane region" description="Helical" evidence="3">
    <location>
        <begin position="11"/>
        <end position="31"/>
    </location>
</feature>
<feature type="transmembrane region" description="Helical" evidence="3">
    <location>
        <begin position="195"/>
        <end position="215"/>
    </location>
</feature>
<feature type="transmembrane region" description="Helical" evidence="3">
    <location>
        <begin position="221"/>
        <end position="241"/>
    </location>
</feature>
<feature type="domain" description="Ubiquitin-like" evidence="4">
    <location>
        <begin position="103"/>
        <end position="176"/>
    </location>
</feature>
<feature type="region of interest" description="Required to release iHOPS from membranes" evidence="2">
    <location>
        <begin position="2"/>
        <end position="30"/>
    </location>
</feature>
<feature type="region of interest" description="Disordered" evidence="5">
    <location>
        <begin position="34"/>
        <end position="101"/>
    </location>
</feature>
<feature type="compositionally biased region" description="Pro residues" evidence="5">
    <location>
        <begin position="40"/>
        <end position="50"/>
    </location>
</feature>
<feature type="modified residue" description="Phosphothreonine" evidence="8 11">
    <location>
        <position position="71"/>
    </location>
</feature>
<feature type="modified residue" description="Phosphoserine" evidence="11">
    <location>
        <position position="73"/>
    </location>
</feature>
<feature type="modified residue" description="Phosphothreonine" evidence="8 10">
    <location>
        <position position="92"/>
    </location>
</feature>
<feature type="modified residue" description="Phosphoserine" evidence="8 9 10">
    <location>
        <position position="98"/>
    </location>
</feature>
<feature type="modified residue" description="Phosphoserine" evidence="11">
    <location>
        <position position="127"/>
    </location>
</feature>
<keyword id="KW-1003">Cell membrane</keyword>
<keyword id="KW-0963">Cytoplasm</keyword>
<keyword id="KW-0206">Cytoskeleton</keyword>
<keyword id="KW-0967">Endosome</keyword>
<keyword id="KW-0472">Membrane</keyword>
<keyword id="KW-0539">Nucleus</keyword>
<keyword id="KW-0597">Phosphoprotein</keyword>
<keyword id="KW-0628">Postsynaptic cell membrane</keyword>
<keyword id="KW-1267">Proteomics identification</keyword>
<keyword id="KW-1185">Reference proteome</keyword>
<keyword id="KW-0770">Synapse</keyword>
<keyword id="KW-0812">Transmembrane</keyword>
<keyword id="KW-1133">Transmembrane helix</keyword>
<evidence type="ECO:0000250" key="1">
    <source>
        <dbReference type="UniProtKB" id="Q53AQ4"/>
    </source>
</evidence>
<evidence type="ECO:0000250" key="2">
    <source>
        <dbReference type="UniProtKB" id="Q9JMG3"/>
    </source>
</evidence>
<evidence type="ECO:0000255" key="3"/>
<evidence type="ECO:0000255" key="4">
    <source>
        <dbReference type="PROSITE-ProRule" id="PRU00214"/>
    </source>
</evidence>
<evidence type="ECO:0000256" key="5">
    <source>
        <dbReference type="SAM" id="MobiDB-lite"/>
    </source>
</evidence>
<evidence type="ECO:0000269" key="6">
    <source>
    </source>
</evidence>
<evidence type="ECO:0000269" key="7">
    <source>
    </source>
</evidence>
<evidence type="ECO:0007744" key="8">
    <source>
    </source>
</evidence>
<evidence type="ECO:0007744" key="9">
    <source>
    </source>
</evidence>
<evidence type="ECO:0007744" key="10">
    <source>
    </source>
</evidence>
<evidence type="ECO:0007744" key="11">
    <source>
    </source>
</evidence>
<proteinExistence type="evidence at protein level"/>
<dbReference type="EMBL" id="AY603380">
    <property type="protein sequence ID" value="AAU00156.1"/>
    <property type="molecule type" value="mRNA"/>
</dbReference>
<dbReference type="EMBL" id="AY037155">
    <property type="protein sequence ID" value="AAK67645.1"/>
    <property type="molecule type" value="mRNA"/>
</dbReference>
<dbReference type="EMBL" id="AY358481">
    <property type="protein sequence ID" value="AAQ88845.1"/>
    <property type="molecule type" value="mRNA"/>
</dbReference>
<dbReference type="EMBL" id="AK314035">
    <property type="protein sequence ID" value="BAG36745.1"/>
    <property type="molecule type" value="mRNA"/>
</dbReference>
<dbReference type="EMBL" id="AC010973">
    <property type="status" value="NOT_ANNOTATED_CDS"/>
    <property type="molecule type" value="Genomic_DNA"/>
</dbReference>
<dbReference type="EMBL" id="CH471173">
    <property type="protein sequence ID" value="EAW54030.1"/>
    <property type="molecule type" value="Genomic_DNA"/>
</dbReference>
<dbReference type="EMBL" id="CH471173">
    <property type="protein sequence ID" value="EAW54032.1"/>
    <property type="molecule type" value="Genomic_DNA"/>
</dbReference>
<dbReference type="EMBL" id="BC000936">
    <property type="protein sequence ID" value="AAH00936.1"/>
    <property type="molecule type" value="mRNA"/>
</dbReference>
<dbReference type="EMBL" id="BC033182">
    <property type="protein sequence ID" value="AAH33182.1"/>
    <property type="molecule type" value="mRNA"/>
</dbReference>
<dbReference type="CCDS" id="CCDS5920.1"/>
<dbReference type="RefSeq" id="NP_001129516.1">
    <property type="nucleotide sequence ID" value="NM_001136044.2"/>
</dbReference>
<dbReference type="RefSeq" id="NP_113622.1">
    <property type="nucleotide sequence ID" value="NM_031434.4"/>
</dbReference>
<dbReference type="SMR" id="Q9BVT8"/>
<dbReference type="BioGRID" id="123686">
    <property type="interactions" value="107"/>
</dbReference>
<dbReference type="CORUM" id="Q9BVT8"/>
<dbReference type="FunCoup" id="Q9BVT8">
    <property type="interactions" value="477"/>
</dbReference>
<dbReference type="IntAct" id="Q9BVT8">
    <property type="interactions" value="32"/>
</dbReference>
<dbReference type="STRING" id="9606.ENSP00000376565"/>
<dbReference type="TCDB" id="8.A.62.1.1">
    <property type="family name" value="the transmembrane and ubiquitin-like domain-containing protein 1 (tmub1) family"/>
</dbReference>
<dbReference type="GlyCosmos" id="Q9BVT8">
    <property type="glycosylation" value="1 site, 1 glycan"/>
</dbReference>
<dbReference type="GlyGen" id="Q9BVT8">
    <property type="glycosylation" value="5 sites, 1 N-linked glycan (1 site), 3 O-linked glycans (3 sites)"/>
</dbReference>
<dbReference type="iPTMnet" id="Q9BVT8"/>
<dbReference type="PhosphoSitePlus" id="Q9BVT8"/>
<dbReference type="SwissPalm" id="Q9BVT8"/>
<dbReference type="BioMuta" id="TMUB1"/>
<dbReference type="DMDM" id="34922062"/>
<dbReference type="jPOST" id="Q9BVT8"/>
<dbReference type="MassIVE" id="Q9BVT8"/>
<dbReference type="PaxDb" id="9606-ENSP00000376565"/>
<dbReference type="PeptideAtlas" id="Q9BVT8"/>
<dbReference type="ProteomicsDB" id="79233"/>
<dbReference type="Pumba" id="Q9BVT8"/>
<dbReference type="TopDownProteomics" id="Q9BVT8"/>
<dbReference type="Antibodypedia" id="32973">
    <property type="antibodies" value="105 antibodies from 17 providers"/>
</dbReference>
<dbReference type="DNASU" id="83590"/>
<dbReference type="Ensembl" id="ENST00000297533.9">
    <property type="protein sequence ID" value="ENSP00000297533.4"/>
    <property type="gene ID" value="ENSG00000164897.14"/>
</dbReference>
<dbReference type="Ensembl" id="ENST00000392818.7">
    <property type="protein sequence ID" value="ENSP00000376565.3"/>
    <property type="gene ID" value="ENSG00000164897.14"/>
</dbReference>
<dbReference type="Ensembl" id="ENST00000462940.1">
    <property type="protein sequence ID" value="ENSP00000417519.1"/>
    <property type="gene ID" value="ENSG00000164897.14"/>
</dbReference>
<dbReference type="Ensembl" id="ENST00000476627.5">
    <property type="protein sequence ID" value="ENSP00000419214.1"/>
    <property type="gene ID" value="ENSG00000164897.14"/>
</dbReference>
<dbReference type="Ensembl" id="ENST00000482202.5">
    <property type="protein sequence ID" value="ENSP00000418709.1"/>
    <property type="gene ID" value="ENSG00000164897.14"/>
</dbReference>
<dbReference type="GeneID" id="83590"/>
<dbReference type="KEGG" id="hsa:83590"/>
<dbReference type="MANE-Select" id="ENST00000297533.9">
    <property type="protein sequence ID" value="ENSP00000297533.4"/>
    <property type="RefSeq nucleotide sequence ID" value="NM_001136044.2"/>
    <property type="RefSeq protein sequence ID" value="NP_001129516.1"/>
</dbReference>
<dbReference type="UCSC" id="uc003wjb.4">
    <property type="organism name" value="human"/>
</dbReference>
<dbReference type="AGR" id="HGNC:21709"/>
<dbReference type="CTD" id="83590"/>
<dbReference type="DisGeNET" id="83590"/>
<dbReference type="GeneCards" id="TMUB1"/>
<dbReference type="HGNC" id="HGNC:21709">
    <property type="gene designation" value="TMUB1"/>
</dbReference>
<dbReference type="HPA" id="ENSG00000164897">
    <property type="expression patterns" value="Low tissue specificity"/>
</dbReference>
<dbReference type="MIM" id="614792">
    <property type="type" value="gene"/>
</dbReference>
<dbReference type="neXtProt" id="NX_Q9BVT8"/>
<dbReference type="OpenTargets" id="ENSG00000164897"/>
<dbReference type="PharmGKB" id="PA134863959"/>
<dbReference type="VEuPathDB" id="HostDB:ENSG00000164897"/>
<dbReference type="eggNOG" id="ENOG502QU8U">
    <property type="taxonomic scope" value="Eukaryota"/>
</dbReference>
<dbReference type="GeneTree" id="ENSGT00390000014069"/>
<dbReference type="HOGENOM" id="CLU_053940_1_0_1"/>
<dbReference type="InParanoid" id="Q9BVT8"/>
<dbReference type="OrthoDB" id="161999at2759"/>
<dbReference type="PAN-GO" id="Q9BVT8">
    <property type="GO annotations" value="1 GO annotation based on evolutionary models"/>
</dbReference>
<dbReference type="PhylomeDB" id="Q9BVT8"/>
<dbReference type="TreeFam" id="TF329265"/>
<dbReference type="PathwayCommons" id="Q9BVT8"/>
<dbReference type="SignaLink" id="Q9BVT8"/>
<dbReference type="BioGRID-ORCS" id="83590">
    <property type="hits" value="8 hits in 1162 CRISPR screens"/>
</dbReference>
<dbReference type="ChiTaRS" id="TMUB1">
    <property type="organism name" value="human"/>
</dbReference>
<dbReference type="GenomeRNAi" id="83590"/>
<dbReference type="Pharos" id="Q9BVT8">
    <property type="development level" value="Tbio"/>
</dbReference>
<dbReference type="PRO" id="PR:Q9BVT8"/>
<dbReference type="Proteomes" id="UP000005640">
    <property type="component" value="Chromosome 7"/>
</dbReference>
<dbReference type="RNAct" id="Q9BVT8">
    <property type="molecule type" value="protein"/>
</dbReference>
<dbReference type="Bgee" id="ENSG00000164897">
    <property type="expression patterns" value="Expressed in mucosa of transverse colon and 99 other cell types or tissues"/>
</dbReference>
<dbReference type="ExpressionAtlas" id="Q9BVT8">
    <property type="expression patterns" value="baseline and differential"/>
</dbReference>
<dbReference type="GO" id="GO:0005813">
    <property type="term" value="C:centrosome"/>
    <property type="evidence" value="ECO:0007669"/>
    <property type="project" value="UniProtKB-SubCell"/>
</dbReference>
<dbReference type="GO" id="GO:0005730">
    <property type="term" value="C:nucleolus"/>
    <property type="evidence" value="ECO:0007669"/>
    <property type="project" value="UniProtKB-SubCell"/>
</dbReference>
<dbReference type="GO" id="GO:0045211">
    <property type="term" value="C:postsynaptic membrane"/>
    <property type="evidence" value="ECO:0007669"/>
    <property type="project" value="UniProtKB-SubCell"/>
</dbReference>
<dbReference type="GO" id="GO:0055037">
    <property type="term" value="C:recycling endosome"/>
    <property type="evidence" value="ECO:0007669"/>
    <property type="project" value="UniProtKB-SubCell"/>
</dbReference>
<dbReference type="GO" id="GO:0036503">
    <property type="term" value="P:ERAD pathway"/>
    <property type="evidence" value="ECO:0000315"/>
    <property type="project" value="UniProtKB"/>
</dbReference>
<dbReference type="CDD" id="cd17131">
    <property type="entry name" value="Ubl_TMUB1"/>
    <property type="match status" value="1"/>
</dbReference>
<dbReference type="FunFam" id="3.10.20.90:FF:000181">
    <property type="entry name" value="transmembrane and ubiquitin-like domain-containing protein 1"/>
    <property type="match status" value="1"/>
</dbReference>
<dbReference type="Gene3D" id="3.10.20.90">
    <property type="entry name" value="Phosphatidylinositol 3-kinase Catalytic Subunit, Chain A, domain 1"/>
    <property type="match status" value="1"/>
</dbReference>
<dbReference type="InterPro" id="IPR040352">
    <property type="entry name" value="TMUB1/2"/>
</dbReference>
<dbReference type="InterPro" id="IPR000626">
    <property type="entry name" value="Ubiquitin-like_dom"/>
</dbReference>
<dbReference type="InterPro" id="IPR029071">
    <property type="entry name" value="Ubiquitin-like_domsf"/>
</dbReference>
<dbReference type="PANTHER" id="PTHR14557">
    <property type="entry name" value="PROTEIN C7ORF21"/>
    <property type="match status" value="1"/>
</dbReference>
<dbReference type="PANTHER" id="PTHR14557:SF3">
    <property type="entry name" value="TRANSMEMBRANE AND UBIQUITIN-LIKE DOMAIN-CONTAINING PROTEIN 1"/>
    <property type="match status" value="1"/>
</dbReference>
<dbReference type="Pfam" id="PF00240">
    <property type="entry name" value="ubiquitin"/>
    <property type="match status" value="1"/>
</dbReference>
<dbReference type="SUPFAM" id="SSF54236">
    <property type="entry name" value="Ubiquitin-like"/>
    <property type="match status" value="1"/>
</dbReference>
<dbReference type="PROSITE" id="PS50053">
    <property type="entry name" value="UBIQUITIN_2"/>
    <property type="match status" value="1"/>
</dbReference>
<reference key="1">
    <citation type="journal article" date="2005" name="J. Cell Sci.">
        <title>HOPS: a novel cAMP-dependent shuttling protein involved in protein synthesis regulation.</title>
        <authorList>
            <person name="Della Fazia M.A."/>
            <person name="Castelli M."/>
            <person name="Bartoli D."/>
            <person name="Pieroni S."/>
            <person name="Pettirossi V."/>
            <person name="Piobbico D."/>
            <person name="Viola-Magni M."/>
            <person name="Servillo G."/>
        </authorList>
    </citation>
    <scope>NUCLEOTIDE SEQUENCE [MRNA]</scope>
</reference>
<reference key="2">
    <citation type="journal article" date="2009" name="Cell. Mol. Immunol.">
        <title>Cloning and characterization of DULP, a novel ubiquitin-like molecule from human dendritic cells.</title>
        <authorList>
            <person name="Liu G.Y."/>
            <person name="Liu S.X."/>
            <person name="Li P."/>
            <person name="Tang L."/>
            <person name="Han Y.M."/>
            <person name="An H.Z."/>
            <person name="Li J.Y."/>
            <person name="Dai X.K."/>
            <person name="Li N."/>
            <person name="Cao X.T."/>
            <person name="Yu Y.Z."/>
        </authorList>
    </citation>
    <scope>NUCLEOTIDE SEQUENCE [MRNA]</scope>
    <scope>SUBCELLULAR LOCATION</scope>
    <source>
        <tissue>Dendritic cell</tissue>
    </source>
</reference>
<reference key="3">
    <citation type="journal article" date="2003" name="Genome Res.">
        <title>The secreted protein discovery initiative (SPDI), a large-scale effort to identify novel human secreted and transmembrane proteins: a bioinformatics assessment.</title>
        <authorList>
            <person name="Clark H.F."/>
            <person name="Gurney A.L."/>
            <person name="Abaya E."/>
            <person name="Baker K."/>
            <person name="Baldwin D.T."/>
            <person name="Brush J."/>
            <person name="Chen J."/>
            <person name="Chow B."/>
            <person name="Chui C."/>
            <person name="Crowley C."/>
            <person name="Currell B."/>
            <person name="Deuel B."/>
            <person name="Dowd P."/>
            <person name="Eaton D."/>
            <person name="Foster J.S."/>
            <person name="Grimaldi C."/>
            <person name="Gu Q."/>
            <person name="Hass P.E."/>
            <person name="Heldens S."/>
            <person name="Huang A."/>
            <person name="Kim H.S."/>
            <person name="Klimowski L."/>
            <person name="Jin Y."/>
            <person name="Johnson S."/>
            <person name="Lee J."/>
            <person name="Lewis L."/>
            <person name="Liao D."/>
            <person name="Mark M.R."/>
            <person name="Robbie E."/>
            <person name="Sanchez C."/>
            <person name="Schoenfeld J."/>
            <person name="Seshagiri S."/>
            <person name="Simmons L."/>
            <person name="Singh J."/>
            <person name="Smith V."/>
            <person name="Stinson J."/>
            <person name="Vagts A."/>
            <person name="Vandlen R.L."/>
            <person name="Watanabe C."/>
            <person name="Wieand D."/>
            <person name="Woods K."/>
            <person name="Xie M.-H."/>
            <person name="Yansura D.G."/>
            <person name="Yi S."/>
            <person name="Yu G."/>
            <person name="Yuan J."/>
            <person name="Zhang M."/>
            <person name="Zhang Z."/>
            <person name="Goddard A.D."/>
            <person name="Wood W.I."/>
            <person name="Godowski P.J."/>
            <person name="Gray A.M."/>
        </authorList>
    </citation>
    <scope>NUCLEOTIDE SEQUENCE [LARGE SCALE MRNA]</scope>
</reference>
<reference key="4">
    <citation type="journal article" date="2004" name="Nat. Genet.">
        <title>Complete sequencing and characterization of 21,243 full-length human cDNAs.</title>
        <authorList>
            <person name="Ota T."/>
            <person name="Suzuki Y."/>
            <person name="Nishikawa T."/>
            <person name="Otsuki T."/>
            <person name="Sugiyama T."/>
            <person name="Irie R."/>
            <person name="Wakamatsu A."/>
            <person name="Hayashi K."/>
            <person name="Sato H."/>
            <person name="Nagai K."/>
            <person name="Kimura K."/>
            <person name="Makita H."/>
            <person name="Sekine M."/>
            <person name="Obayashi M."/>
            <person name="Nishi T."/>
            <person name="Shibahara T."/>
            <person name="Tanaka T."/>
            <person name="Ishii S."/>
            <person name="Yamamoto J."/>
            <person name="Saito K."/>
            <person name="Kawai Y."/>
            <person name="Isono Y."/>
            <person name="Nakamura Y."/>
            <person name="Nagahari K."/>
            <person name="Murakami K."/>
            <person name="Yasuda T."/>
            <person name="Iwayanagi T."/>
            <person name="Wagatsuma M."/>
            <person name="Shiratori A."/>
            <person name="Sudo H."/>
            <person name="Hosoiri T."/>
            <person name="Kaku Y."/>
            <person name="Kodaira H."/>
            <person name="Kondo H."/>
            <person name="Sugawara M."/>
            <person name="Takahashi M."/>
            <person name="Kanda K."/>
            <person name="Yokoi T."/>
            <person name="Furuya T."/>
            <person name="Kikkawa E."/>
            <person name="Omura Y."/>
            <person name="Abe K."/>
            <person name="Kamihara K."/>
            <person name="Katsuta N."/>
            <person name="Sato K."/>
            <person name="Tanikawa M."/>
            <person name="Yamazaki M."/>
            <person name="Ninomiya K."/>
            <person name="Ishibashi T."/>
            <person name="Yamashita H."/>
            <person name="Murakawa K."/>
            <person name="Fujimori K."/>
            <person name="Tanai H."/>
            <person name="Kimata M."/>
            <person name="Watanabe M."/>
            <person name="Hiraoka S."/>
            <person name="Chiba Y."/>
            <person name="Ishida S."/>
            <person name="Ono Y."/>
            <person name="Takiguchi S."/>
            <person name="Watanabe S."/>
            <person name="Yosida M."/>
            <person name="Hotuta T."/>
            <person name="Kusano J."/>
            <person name="Kanehori K."/>
            <person name="Takahashi-Fujii A."/>
            <person name="Hara H."/>
            <person name="Tanase T.-O."/>
            <person name="Nomura Y."/>
            <person name="Togiya S."/>
            <person name="Komai F."/>
            <person name="Hara R."/>
            <person name="Takeuchi K."/>
            <person name="Arita M."/>
            <person name="Imose N."/>
            <person name="Musashino K."/>
            <person name="Yuuki H."/>
            <person name="Oshima A."/>
            <person name="Sasaki N."/>
            <person name="Aotsuka S."/>
            <person name="Yoshikawa Y."/>
            <person name="Matsunawa H."/>
            <person name="Ichihara T."/>
            <person name="Shiohata N."/>
            <person name="Sano S."/>
            <person name="Moriya S."/>
            <person name="Momiyama H."/>
            <person name="Satoh N."/>
            <person name="Takami S."/>
            <person name="Terashima Y."/>
            <person name="Suzuki O."/>
            <person name="Nakagawa S."/>
            <person name="Senoh A."/>
            <person name="Mizoguchi H."/>
            <person name="Goto Y."/>
            <person name="Shimizu F."/>
            <person name="Wakebe H."/>
            <person name="Hishigaki H."/>
            <person name="Watanabe T."/>
            <person name="Sugiyama A."/>
            <person name="Takemoto M."/>
            <person name="Kawakami B."/>
            <person name="Yamazaki M."/>
            <person name="Watanabe K."/>
            <person name="Kumagai A."/>
            <person name="Itakura S."/>
            <person name="Fukuzumi Y."/>
            <person name="Fujimori Y."/>
            <person name="Komiyama M."/>
            <person name="Tashiro H."/>
            <person name="Tanigami A."/>
            <person name="Fujiwara T."/>
            <person name="Ono T."/>
            <person name="Yamada K."/>
            <person name="Fujii Y."/>
            <person name="Ozaki K."/>
            <person name="Hirao M."/>
            <person name="Ohmori Y."/>
            <person name="Kawabata A."/>
            <person name="Hikiji T."/>
            <person name="Kobatake N."/>
            <person name="Inagaki H."/>
            <person name="Ikema Y."/>
            <person name="Okamoto S."/>
            <person name="Okitani R."/>
            <person name="Kawakami T."/>
            <person name="Noguchi S."/>
            <person name="Itoh T."/>
            <person name="Shigeta K."/>
            <person name="Senba T."/>
            <person name="Matsumura K."/>
            <person name="Nakajima Y."/>
            <person name="Mizuno T."/>
            <person name="Morinaga M."/>
            <person name="Sasaki M."/>
            <person name="Togashi T."/>
            <person name="Oyama M."/>
            <person name="Hata H."/>
            <person name="Watanabe M."/>
            <person name="Komatsu T."/>
            <person name="Mizushima-Sugano J."/>
            <person name="Satoh T."/>
            <person name="Shirai Y."/>
            <person name="Takahashi Y."/>
            <person name="Nakagawa K."/>
            <person name="Okumura K."/>
            <person name="Nagase T."/>
            <person name="Nomura N."/>
            <person name="Kikuchi H."/>
            <person name="Masuho Y."/>
            <person name="Yamashita R."/>
            <person name="Nakai K."/>
            <person name="Yada T."/>
            <person name="Nakamura Y."/>
            <person name="Ohara O."/>
            <person name="Isogai T."/>
            <person name="Sugano S."/>
        </authorList>
    </citation>
    <scope>NUCLEOTIDE SEQUENCE [LARGE SCALE MRNA]</scope>
</reference>
<reference key="5">
    <citation type="journal article" date="2003" name="Nature">
        <title>The DNA sequence of human chromosome 7.</title>
        <authorList>
            <person name="Hillier L.W."/>
            <person name="Fulton R.S."/>
            <person name="Fulton L.A."/>
            <person name="Graves T.A."/>
            <person name="Pepin K.H."/>
            <person name="Wagner-McPherson C."/>
            <person name="Layman D."/>
            <person name="Maas J."/>
            <person name="Jaeger S."/>
            <person name="Walker R."/>
            <person name="Wylie K."/>
            <person name="Sekhon M."/>
            <person name="Becker M.C."/>
            <person name="O'Laughlin M.D."/>
            <person name="Schaller M.E."/>
            <person name="Fewell G.A."/>
            <person name="Delehaunty K.D."/>
            <person name="Miner T.L."/>
            <person name="Nash W.E."/>
            <person name="Cordes M."/>
            <person name="Du H."/>
            <person name="Sun H."/>
            <person name="Edwards J."/>
            <person name="Bradshaw-Cordum H."/>
            <person name="Ali J."/>
            <person name="Andrews S."/>
            <person name="Isak A."/>
            <person name="Vanbrunt A."/>
            <person name="Nguyen C."/>
            <person name="Du F."/>
            <person name="Lamar B."/>
            <person name="Courtney L."/>
            <person name="Kalicki J."/>
            <person name="Ozersky P."/>
            <person name="Bielicki L."/>
            <person name="Scott K."/>
            <person name="Holmes A."/>
            <person name="Harkins R."/>
            <person name="Harris A."/>
            <person name="Strong C.M."/>
            <person name="Hou S."/>
            <person name="Tomlinson C."/>
            <person name="Dauphin-Kohlberg S."/>
            <person name="Kozlowicz-Reilly A."/>
            <person name="Leonard S."/>
            <person name="Rohlfing T."/>
            <person name="Rock S.M."/>
            <person name="Tin-Wollam A.-M."/>
            <person name="Abbott A."/>
            <person name="Minx P."/>
            <person name="Maupin R."/>
            <person name="Strowmatt C."/>
            <person name="Latreille P."/>
            <person name="Miller N."/>
            <person name="Johnson D."/>
            <person name="Murray J."/>
            <person name="Woessner J.P."/>
            <person name="Wendl M.C."/>
            <person name="Yang S.-P."/>
            <person name="Schultz B.R."/>
            <person name="Wallis J.W."/>
            <person name="Spieth J."/>
            <person name="Bieri T.A."/>
            <person name="Nelson J.O."/>
            <person name="Berkowicz N."/>
            <person name="Wohldmann P.E."/>
            <person name="Cook L.L."/>
            <person name="Hickenbotham M.T."/>
            <person name="Eldred J."/>
            <person name="Williams D."/>
            <person name="Bedell J.A."/>
            <person name="Mardis E.R."/>
            <person name="Clifton S.W."/>
            <person name="Chissoe S.L."/>
            <person name="Marra M.A."/>
            <person name="Raymond C."/>
            <person name="Haugen E."/>
            <person name="Gillett W."/>
            <person name="Zhou Y."/>
            <person name="James R."/>
            <person name="Phelps K."/>
            <person name="Iadanoto S."/>
            <person name="Bubb K."/>
            <person name="Simms E."/>
            <person name="Levy R."/>
            <person name="Clendenning J."/>
            <person name="Kaul R."/>
            <person name="Kent W.J."/>
            <person name="Furey T.S."/>
            <person name="Baertsch R.A."/>
            <person name="Brent M.R."/>
            <person name="Keibler E."/>
            <person name="Flicek P."/>
            <person name="Bork P."/>
            <person name="Suyama M."/>
            <person name="Bailey J.A."/>
            <person name="Portnoy M.E."/>
            <person name="Torrents D."/>
            <person name="Chinwalla A.T."/>
            <person name="Gish W.R."/>
            <person name="Eddy S.R."/>
            <person name="McPherson J.D."/>
            <person name="Olson M.V."/>
            <person name="Eichler E.E."/>
            <person name="Green E.D."/>
            <person name="Waterston R.H."/>
            <person name="Wilson R.K."/>
        </authorList>
    </citation>
    <scope>NUCLEOTIDE SEQUENCE [LARGE SCALE GENOMIC DNA]</scope>
</reference>
<reference key="6">
    <citation type="submission" date="2005-09" db="EMBL/GenBank/DDBJ databases">
        <authorList>
            <person name="Mural R.J."/>
            <person name="Istrail S."/>
            <person name="Sutton G.G."/>
            <person name="Florea L."/>
            <person name="Halpern A.L."/>
            <person name="Mobarry C.M."/>
            <person name="Lippert R."/>
            <person name="Walenz B."/>
            <person name="Shatkay H."/>
            <person name="Dew I."/>
            <person name="Miller J.R."/>
            <person name="Flanigan M.J."/>
            <person name="Edwards N.J."/>
            <person name="Bolanos R."/>
            <person name="Fasulo D."/>
            <person name="Halldorsson B.V."/>
            <person name="Hannenhalli S."/>
            <person name="Turner R."/>
            <person name="Yooseph S."/>
            <person name="Lu F."/>
            <person name="Nusskern D.R."/>
            <person name="Shue B.C."/>
            <person name="Zheng X.H."/>
            <person name="Zhong F."/>
            <person name="Delcher A.L."/>
            <person name="Huson D.H."/>
            <person name="Kravitz S.A."/>
            <person name="Mouchard L."/>
            <person name="Reinert K."/>
            <person name="Remington K.A."/>
            <person name="Clark A.G."/>
            <person name="Waterman M.S."/>
            <person name="Eichler E.E."/>
            <person name="Adams M.D."/>
            <person name="Hunkapiller M.W."/>
            <person name="Myers E.W."/>
            <person name="Venter J.C."/>
        </authorList>
    </citation>
    <scope>NUCLEOTIDE SEQUENCE [LARGE SCALE GENOMIC DNA]</scope>
</reference>
<reference key="7">
    <citation type="journal article" date="2004" name="Genome Res.">
        <title>The status, quality, and expansion of the NIH full-length cDNA project: the Mammalian Gene Collection (MGC).</title>
        <authorList>
            <consortium name="The MGC Project Team"/>
        </authorList>
    </citation>
    <scope>NUCLEOTIDE SEQUENCE [LARGE SCALE MRNA]</scope>
    <source>
        <tissue>Kidney</tissue>
        <tissue>Placenta</tissue>
    </source>
</reference>
<reference key="8">
    <citation type="journal article" date="2008" name="Mol. Cell">
        <title>Kinase-selective enrichment enables quantitative phosphoproteomics of the kinome across the cell cycle.</title>
        <authorList>
            <person name="Daub H."/>
            <person name="Olsen J.V."/>
            <person name="Bairlein M."/>
            <person name="Gnad F."/>
            <person name="Oppermann F.S."/>
            <person name="Korner R."/>
            <person name="Greff Z."/>
            <person name="Keri G."/>
            <person name="Stemmann O."/>
            <person name="Mann M."/>
        </authorList>
    </citation>
    <scope>PHOSPHORYLATION [LARGE SCALE ANALYSIS] AT SER-98</scope>
    <scope>IDENTIFICATION BY MASS SPECTROMETRY [LARGE SCALE ANALYSIS]</scope>
    <source>
        <tissue>Cervix carcinoma</tissue>
    </source>
</reference>
<reference key="9">
    <citation type="journal article" date="2008" name="Proc. Natl. Acad. Sci. U.S.A.">
        <title>A quantitative atlas of mitotic phosphorylation.</title>
        <authorList>
            <person name="Dephoure N."/>
            <person name="Zhou C."/>
            <person name="Villen J."/>
            <person name="Beausoleil S.A."/>
            <person name="Bakalarski C.E."/>
            <person name="Elledge S.J."/>
            <person name="Gygi S.P."/>
        </authorList>
    </citation>
    <scope>PHOSPHORYLATION [LARGE SCALE ANALYSIS] AT THR-71; THR-92 AND SER-98</scope>
    <scope>IDENTIFICATION BY MASS SPECTROMETRY [LARGE SCALE ANALYSIS]</scope>
    <source>
        <tissue>Cervix carcinoma</tissue>
    </source>
</reference>
<reference key="10">
    <citation type="journal article" date="2010" name="Sci. Signal.">
        <title>Quantitative phosphoproteomics reveals widespread full phosphorylation site occupancy during mitosis.</title>
        <authorList>
            <person name="Olsen J.V."/>
            <person name="Vermeulen M."/>
            <person name="Santamaria A."/>
            <person name="Kumar C."/>
            <person name="Miller M.L."/>
            <person name="Jensen L.J."/>
            <person name="Gnad F."/>
            <person name="Cox J."/>
            <person name="Jensen T.S."/>
            <person name="Nigg E.A."/>
            <person name="Brunak S."/>
            <person name="Mann M."/>
        </authorList>
    </citation>
    <scope>PHOSPHORYLATION [LARGE SCALE ANALYSIS] AT THR-92 AND SER-98</scope>
    <scope>IDENTIFICATION BY MASS SPECTROMETRY [LARGE SCALE ANALYSIS]</scope>
    <source>
        <tissue>Cervix carcinoma</tissue>
    </source>
</reference>
<reference key="11">
    <citation type="journal article" date="2011" name="J. Biol. Chem.">
        <title>Membrane-associated ubiquitin ligase complex containing gp78 mediates sterol-accelerated degradation of 3-hydroxy-3-methylglutaryl-coenzyme A reductase.</title>
        <authorList>
            <person name="Jo Y."/>
            <person name="Sguigna P.V."/>
            <person name="DeBose-Boyd R.A."/>
        </authorList>
    </citation>
    <scope>FUNCTION</scope>
    <scope>INTERACTION WITH ERLIN2 AND AMFR</scope>
</reference>
<reference key="12">
    <citation type="journal article" date="2013" name="J. Proteome Res.">
        <title>Toward a comprehensive characterization of a human cancer cell phosphoproteome.</title>
        <authorList>
            <person name="Zhou H."/>
            <person name="Di Palma S."/>
            <person name="Preisinger C."/>
            <person name="Peng M."/>
            <person name="Polat A.N."/>
            <person name="Heck A.J."/>
            <person name="Mohammed S."/>
        </authorList>
    </citation>
    <scope>PHOSPHORYLATION [LARGE SCALE ANALYSIS] AT THR-71; SER-73 AND SER-127</scope>
    <scope>IDENTIFICATION BY MASS SPECTROMETRY [LARGE SCALE ANALYSIS]</scope>
    <source>
        <tissue>Erythroleukemia</tissue>
    </source>
</reference>
<reference key="13">
    <citation type="journal article" date="2014" name="Cell Cycle">
        <title>Different functions of HOPS isoforms in the cell: HOPS shuttling isoform is determined by RIP cleavage system.</title>
        <authorList>
            <person name="Castelli M."/>
            <person name="Piobbico D."/>
            <person name="Bartoli D."/>
            <person name="Pieroni S."/>
            <person name="Brunacci C."/>
            <person name="Bellet M.M."/>
            <person name="Chiacchiaretta M."/>
            <person name="Della Fazia M.A."/>
            <person name="Servillo G."/>
        </authorList>
    </citation>
    <scope>TISSUE SPECIFICITY</scope>
</reference>
<protein>
    <recommendedName>
        <fullName>Transmembrane and ubiquitin-like domain-containing protein 1</fullName>
    </recommendedName>
    <alternativeName>
        <fullName>Dendritic cell-derived ubiquitin-like protein</fullName>
        <shortName>DULP</shortName>
    </alternativeName>
    <alternativeName>
        <fullName>Hepatocyte odd protein shuttling protein</fullName>
    </alternativeName>
    <alternativeName>
        <fullName>Ubiquitin-like protein SB144</fullName>
    </alternativeName>
    <component>
        <recommendedName>
            <fullName>iHOPS</fullName>
        </recommendedName>
    </component>
</protein>
<sequence length="246" mass="26261">MTLIEGVGDEVTVLFSVLACLLVLALAWVSTHTAEGGDPLPQPSGTPTPSQPSAAMAATDSMRGEAPGAETPSLRHRGQAAQPEPSTGFTATPPAPDSPQEPLVLRLKFLNDSEQVARAWPHDTIGSLKRTQFPGREQQVRLIYQGQLLGDDTQTLGSLHLPPNCVLHCHVSTRVGPPNPPCPPGSEPGPSGLEIGSLLLPLLLLLLLLLWYCQIQYRPFFPLTATLGLAGFTLLLSLLAFAMYRP</sequence>
<organism>
    <name type="scientific">Homo sapiens</name>
    <name type="common">Human</name>
    <dbReference type="NCBI Taxonomy" id="9606"/>
    <lineage>
        <taxon>Eukaryota</taxon>
        <taxon>Metazoa</taxon>
        <taxon>Chordata</taxon>
        <taxon>Craniata</taxon>
        <taxon>Vertebrata</taxon>
        <taxon>Euteleostomi</taxon>
        <taxon>Mammalia</taxon>
        <taxon>Eutheria</taxon>
        <taxon>Euarchontoglires</taxon>
        <taxon>Primates</taxon>
        <taxon>Haplorrhini</taxon>
        <taxon>Catarrhini</taxon>
        <taxon>Hominidae</taxon>
        <taxon>Homo</taxon>
    </lineage>
</organism>
<accession>Q9BVT8</accession>
<accession>D3DX06</accession>
<accession>Q53AQ2</accession>
<name>TMUB1_HUMAN</name>
<gene>
    <name type="primary">TMUB1</name>
    <name type="synonym">C7orf21</name>
    <name type="synonym">DULP</name>
    <name type="synonym">HOPS</name>
    <name type="ORF">SB144</name>
    <name type="ORF">UNQ763/PRO1555</name>
</gene>